<reference key="1">
    <citation type="journal article" date="2004" name="Proc. Natl. Acad. Sci. U.S.A.">
        <title>Genome sequence of the deep-sea gamma-proteobacterium Idiomarina loihiensis reveals amino acid fermentation as a source of carbon and energy.</title>
        <authorList>
            <person name="Hou S."/>
            <person name="Saw J.H."/>
            <person name="Lee K.S."/>
            <person name="Freitas T.A."/>
            <person name="Belisle C."/>
            <person name="Kawarabayasi Y."/>
            <person name="Donachie S.P."/>
            <person name="Pikina A."/>
            <person name="Galperin M.Y."/>
            <person name="Koonin E.V."/>
            <person name="Makarova K.S."/>
            <person name="Omelchenko M.V."/>
            <person name="Sorokin A."/>
            <person name="Wolf Y.I."/>
            <person name="Li Q.X."/>
            <person name="Keum Y.S."/>
            <person name="Campbell S."/>
            <person name="Denery J."/>
            <person name="Aizawa S."/>
            <person name="Shibata S."/>
            <person name="Malahoff A."/>
            <person name="Alam M."/>
        </authorList>
    </citation>
    <scope>NUCLEOTIDE SEQUENCE [LARGE SCALE GENOMIC DNA]</scope>
    <source>
        <strain>ATCC BAA-735 / DSM 15497 / L2-TR</strain>
    </source>
</reference>
<protein>
    <recommendedName>
        <fullName evidence="1">DNA ligase</fullName>
        <ecNumber evidence="1">6.5.1.2</ecNumber>
    </recommendedName>
    <alternativeName>
        <fullName evidence="1">Polydeoxyribonucleotide synthase [NAD(+)]</fullName>
    </alternativeName>
</protein>
<dbReference type="EC" id="6.5.1.2" evidence="1"/>
<dbReference type="EMBL" id="AE017340">
    <property type="protein sequence ID" value="AAV82533.1"/>
    <property type="molecule type" value="Genomic_DNA"/>
</dbReference>
<dbReference type="RefSeq" id="WP_011234936.1">
    <property type="nucleotide sequence ID" value="NC_006512.1"/>
</dbReference>
<dbReference type="SMR" id="Q5QUK1"/>
<dbReference type="STRING" id="283942.IL1700"/>
<dbReference type="GeneID" id="41336875"/>
<dbReference type="KEGG" id="ilo:IL1700"/>
<dbReference type="eggNOG" id="COG0272">
    <property type="taxonomic scope" value="Bacteria"/>
</dbReference>
<dbReference type="HOGENOM" id="CLU_007764_2_1_6"/>
<dbReference type="OrthoDB" id="9759736at2"/>
<dbReference type="Proteomes" id="UP000001171">
    <property type="component" value="Chromosome"/>
</dbReference>
<dbReference type="GO" id="GO:0005829">
    <property type="term" value="C:cytosol"/>
    <property type="evidence" value="ECO:0007669"/>
    <property type="project" value="TreeGrafter"/>
</dbReference>
<dbReference type="GO" id="GO:0003677">
    <property type="term" value="F:DNA binding"/>
    <property type="evidence" value="ECO:0007669"/>
    <property type="project" value="InterPro"/>
</dbReference>
<dbReference type="GO" id="GO:0003911">
    <property type="term" value="F:DNA ligase (NAD+) activity"/>
    <property type="evidence" value="ECO:0007669"/>
    <property type="project" value="UniProtKB-UniRule"/>
</dbReference>
<dbReference type="GO" id="GO:0046872">
    <property type="term" value="F:metal ion binding"/>
    <property type="evidence" value="ECO:0007669"/>
    <property type="project" value="UniProtKB-KW"/>
</dbReference>
<dbReference type="GO" id="GO:0006281">
    <property type="term" value="P:DNA repair"/>
    <property type="evidence" value="ECO:0007669"/>
    <property type="project" value="UniProtKB-KW"/>
</dbReference>
<dbReference type="GO" id="GO:0006260">
    <property type="term" value="P:DNA replication"/>
    <property type="evidence" value="ECO:0007669"/>
    <property type="project" value="UniProtKB-KW"/>
</dbReference>
<dbReference type="CDD" id="cd17748">
    <property type="entry name" value="BRCT_DNA_ligase_like"/>
    <property type="match status" value="1"/>
</dbReference>
<dbReference type="CDD" id="cd00114">
    <property type="entry name" value="LIGANc"/>
    <property type="match status" value="1"/>
</dbReference>
<dbReference type="FunFam" id="1.10.150.20:FF:000006">
    <property type="entry name" value="DNA ligase"/>
    <property type="match status" value="1"/>
</dbReference>
<dbReference type="FunFam" id="1.10.150.20:FF:000007">
    <property type="entry name" value="DNA ligase"/>
    <property type="match status" value="1"/>
</dbReference>
<dbReference type="FunFam" id="1.10.287.610:FF:000002">
    <property type="entry name" value="DNA ligase"/>
    <property type="match status" value="1"/>
</dbReference>
<dbReference type="FunFam" id="2.40.50.140:FF:000012">
    <property type="entry name" value="DNA ligase"/>
    <property type="match status" value="1"/>
</dbReference>
<dbReference type="FunFam" id="3.30.470.30:FF:000001">
    <property type="entry name" value="DNA ligase"/>
    <property type="match status" value="1"/>
</dbReference>
<dbReference type="FunFam" id="6.20.10.30:FF:000001">
    <property type="entry name" value="DNA ligase"/>
    <property type="match status" value="1"/>
</dbReference>
<dbReference type="Gene3D" id="6.20.10.30">
    <property type="match status" value="1"/>
</dbReference>
<dbReference type="Gene3D" id="1.10.150.20">
    <property type="entry name" value="5' to 3' exonuclease, C-terminal subdomain"/>
    <property type="match status" value="2"/>
</dbReference>
<dbReference type="Gene3D" id="3.40.50.10190">
    <property type="entry name" value="BRCT domain"/>
    <property type="match status" value="1"/>
</dbReference>
<dbReference type="Gene3D" id="3.30.470.30">
    <property type="entry name" value="DNA ligase/mRNA capping enzyme"/>
    <property type="match status" value="1"/>
</dbReference>
<dbReference type="Gene3D" id="1.10.287.610">
    <property type="entry name" value="Helix hairpin bin"/>
    <property type="match status" value="1"/>
</dbReference>
<dbReference type="Gene3D" id="2.40.50.140">
    <property type="entry name" value="Nucleic acid-binding proteins"/>
    <property type="match status" value="1"/>
</dbReference>
<dbReference type="HAMAP" id="MF_01588">
    <property type="entry name" value="DNA_ligase_A"/>
    <property type="match status" value="1"/>
</dbReference>
<dbReference type="InterPro" id="IPR001357">
    <property type="entry name" value="BRCT_dom"/>
</dbReference>
<dbReference type="InterPro" id="IPR036420">
    <property type="entry name" value="BRCT_dom_sf"/>
</dbReference>
<dbReference type="InterPro" id="IPR041663">
    <property type="entry name" value="DisA/LigA_HHH"/>
</dbReference>
<dbReference type="InterPro" id="IPR001679">
    <property type="entry name" value="DNA_ligase"/>
</dbReference>
<dbReference type="InterPro" id="IPR018239">
    <property type="entry name" value="DNA_ligase_AS"/>
</dbReference>
<dbReference type="InterPro" id="IPR033136">
    <property type="entry name" value="DNA_ligase_CS"/>
</dbReference>
<dbReference type="InterPro" id="IPR013839">
    <property type="entry name" value="DNAligase_adenylation"/>
</dbReference>
<dbReference type="InterPro" id="IPR013840">
    <property type="entry name" value="DNAligase_N"/>
</dbReference>
<dbReference type="InterPro" id="IPR003583">
    <property type="entry name" value="Hlx-hairpin-Hlx_DNA-bd_motif"/>
</dbReference>
<dbReference type="InterPro" id="IPR012340">
    <property type="entry name" value="NA-bd_OB-fold"/>
</dbReference>
<dbReference type="InterPro" id="IPR004150">
    <property type="entry name" value="NAD_DNA_ligase_OB"/>
</dbReference>
<dbReference type="InterPro" id="IPR010994">
    <property type="entry name" value="RuvA_2-like"/>
</dbReference>
<dbReference type="InterPro" id="IPR004149">
    <property type="entry name" value="Znf_DNAligase_C4"/>
</dbReference>
<dbReference type="NCBIfam" id="TIGR00575">
    <property type="entry name" value="dnlj"/>
    <property type="match status" value="1"/>
</dbReference>
<dbReference type="NCBIfam" id="NF005932">
    <property type="entry name" value="PRK07956.1"/>
    <property type="match status" value="1"/>
</dbReference>
<dbReference type="PANTHER" id="PTHR23389">
    <property type="entry name" value="CHROMOSOME TRANSMISSION FIDELITY FACTOR 18"/>
    <property type="match status" value="1"/>
</dbReference>
<dbReference type="PANTHER" id="PTHR23389:SF9">
    <property type="entry name" value="DNA LIGASE"/>
    <property type="match status" value="1"/>
</dbReference>
<dbReference type="Pfam" id="PF00533">
    <property type="entry name" value="BRCT"/>
    <property type="match status" value="1"/>
</dbReference>
<dbReference type="Pfam" id="PF01653">
    <property type="entry name" value="DNA_ligase_aden"/>
    <property type="match status" value="1"/>
</dbReference>
<dbReference type="Pfam" id="PF03120">
    <property type="entry name" value="DNA_ligase_OB"/>
    <property type="match status" value="1"/>
</dbReference>
<dbReference type="Pfam" id="PF03119">
    <property type="entry name" value="DNA_ligase_ZBD"/>
    <property type="match status" value="1"/>
</dbReference>
<dbReference type="Pfam" id="PF12826">
    <property type="entry name" value="HHH_2"/>
    <property type="match status" value="1"/>
</dbReference>
<dbReference type="Pfam" id="PF14520">
    <property type="entry name" value="HHH_5"/>
    <property type="match status" value="1"/>
</dbReference>
<dbReference type="PIRSF" id="PIRSF001604">
    <property type="entry name" value="LigA"/>
    <property type="match status" value="1"/>
</dbReference>
<dbReference type="SMART" id="SM00292">
    <property type="entry name" value="BRCT"/>
    <property type="match status" value="1"/>
</dbReference>
<dbReference type="SMART" id="SM00278">
    <property type="entry name" value="HhH1"/>
    <property type="match status" value="4"/>
</dbReference>
<dbReference type="SMART" id="SM00532">
    <property type="entry name" value="LIGANc"/>
    <property type="match status" value="1"/>
</dbReference>
<dbReference type="SUPFAM" id="SSF52113">
    <property type="entry name" value="BRCT domain"/>
    <property type="match status" value="1"/>
</dbReference>
<dbReference type="SUPFAM" id="SSF56091">
    <property type="entry name" value="DNA ligase/mRNA capping enzyme, catalytic domain"/>
    <property type="match status" value="1"/>
</dbReference>
<dbReference type="SUPFAM" id="SSF50249">
    <property type="entry name" value="Nucleic acid-binding proteins"/>
    <property type="match status" value="1"/>
</dbReference>
<dbReference type="SUPFAM" id="SSF47781">
    <property type="entry name" value="RuvA domain 2-like"/>
    <property type="match status" value="1"/>
</dbReference>
<dbReference type="PROSITE" id="PS50172">
    <property type="entry name" value="BRCT"/>
    <property type="match status" value="1"/>
</dbReference>
<dbReference type="PROSITE" id="PS01055">
    <property type="entry name" value="DNA_LIGASE_N1"/>
    <property type="match status" value="1"/>
</dbReference>
<dbReference type="PROSITE" id="PS01056">
    <property type="entry name" value="DNA_LIGASE_N2"/>
    <property type="match status" value="1"/>
</dbReference>
<keyword id="KW-0227">DNA damage</keyword>
<keyword id="KW-0234">DNA repair</keyword>
<keyword id="KW-0235">DNA replication</keyword>
<keyword id="KW-0436">Ligase</keyword>
<keyword id="KW-0460">Magnesium</keyword>
<keyword id="KW-0464">Manganese</keyword>
<keyword id="KW-0479">Metal-binding</keyword>
<keyword id="KW-0520">NAD</keyword>
<keyword id="KW-1185">Reference proteome</keyword>
<keyword id="KW-0862">Zinc</keyword>
<sequence length="670" mass="74076">MNQSVHQRMQELEQLLNRYNQEYYENDEPSVPDAEYDRLFRELKTLETEHPDLKSAQSPTMKVGGKPLGQFRSVEHEVPMLSLDNAFSVDEFEAFSKRVEQRLDTNQTVTFCCEPKLDGAAVSLLYENGLLVRGATRGDGQSGEDITENVKTIRNVPLKLSGDVPERLEVRGEVVMPLGAFERFNEQARQREEKVFANPRNAAAGSLRQLDSRITAKRPLHFYAYSLGLISETTQLPDSHHQRLLQLKDWGLPVNIEIKTVDSVQGCDDYYEAILARRDTLNYDIDGVVFKVDSIRLQQDLGFVARAPRWAIARKFPAQEQLTTITGVDFQVGRTGAITPVARLEPVNVGGVTVSNATLHNADEIERLGVRIGDCVSIRRAGDVIPQVVSVIKDKRPENTKAIEFPQHCPICQSDIERVEGEAVARCTGGLYCAAQRKEAIKHFASRKAMDIDGLGDKIVEQLVERDWIKSPADLYRLSKAELATLPRMGAKSAENLRNAIKATQETTLARFIYALGIREVGEATANALANHFKNLDALIAAESEQLQEVPDVGAVVAKHIVAFFHEAHNQQVVAELREFISWPEGEEASSVQSDRLSGNTYVITGTLSTMTRDEAKSALEALGAKVASSVSKKTTALVAGENAGSKLTKAQSLGLDILDENALAELLSD</sequence>
<organism>
    <name type="scientific">Idiomarina loihiensis (strain ATCC BAA-735 / DSM 15497 / L2-TR)</name>
    <dbReference type="NCBI Taxonomy" id="283942"/>
    <lineage>
        <taxon>Bacteria</taxon>
        <taxon>Pseudomonadati</taxon>
        <taxon>Pseudomonadota</taxon>
        <taxon>Gammaproteobacteria</taxon>
        <taxon>Alteromonadales</taxon>
        <taxon>Idiomarinaceae</taxon>
        <taxon>Idiomarina</taxon>
    </lineage>
</organism>
<comment type="function">
    <text evidence="1">DNA ligase that catalyzes the formation of phosphodiester linkages between 5'-phosphoryl and 3'-hydroxyl groups in double-stranded DNA using NAD as a coenzyme and as the energy source for the reaction. It is essential for DNA replication and repair of damaged DNA.</text>
</comment>
<comment type="catalytic activity">
    <reaction evidence="1">
        <text>NAD(+) + (deoxyribonucleotide)n-3'-hydroxyl + 5'-phospho-(deoxyribonucleotide)m = (deoxyribonucleotide)n+m + AMP + beta-nicotinamide D-nucleotide.</text>
        <dbReference type="EC" id="6.5.1.2"/>
    </reaction>
</comment>
<comment type="cofactor">
    <cofactor evidence="1">
        <name>Mg(2+)</name>
        <dbReference type="ChEBI" id="CHEBI:18420"/>
    </cofactor>
    <cofactor evidence="1">
        <name>Mn(2+)</name>
        <dbReference type="ChEBI" id="CHEBI:29035"/>
    </cofactor>
</comment>
<comment type="similarity">
    <text evidence="1">Belongs to the NAD-dependent DNA ligase family. LigA subfamily.</text>
</comment>
<feature type="chain" id="PRO_0000313267" description="DNA ligase">
    <location>
        <begin position="1"/>
        <end position="670"/>
    </location>
</feature>
<feature type="domain" description="BRCT" evidence="1">
    <location>
        <begin position="592"/>
        <end position="670"/>
    </location>
</feature>
<feature type="active site" description="N6-AMP-lysine intermediate" evidence="1">
    <location>
        <position position="116"/>
    </location>
</feature>
<feature type="binding site" evidence="1">
    <location>
        <begin position="33"/>
        <end position="37"/>
    </location>
    <ligand>
        <name>NAD(+)</name>
        <dbReference type="ChEBI" id="CHEBI:57540"/>
    </ligand>
</feature>
<feature type="binding site" evidence="1">
    <location>
        <begin position="82"/>
        <end position="83"/>
    </location>
    <ligand>
        <name>NAD(+)</name>
        <dbReference type="ChEBI" id="CHEBI:57540"/>
    </ligand>
</feature>
<feature type="binding site" evidence="1">
    <location>
        <position position="114"/>
    </location>
    <ligand>
        <name>NAD(+)</name>
        <dbReference type="ChEBI" id="CHEBI:57540"/>
    </ligand>
</feature>
<feature type="binding site" evidence="1">
    <location>
        <position position="137"/>
    </location>
    <ligand>
        <name>NAD(+)</name>
        <dbReference type="ChEBI" id="CHEBI:57540"/>
    </ligand>
</feature>
<feature type="binding site" evidence="1">
    <location>
        <position position="173"/>
    </location>
    <ligand>
        <name>NAD(+)</name>
        <dbReference type="ChEBI" id="CHEBI:57540"/>
    </ligand>
</feature>
<feature type="binding site" evidence="1">
    <location>
        <position position="291"/>
    </location>
    <ligand>
        <name>NAD(+)</name>
        <dbReference type="ChEBI" id="CHEBI:57540"/>
    </ligand>
</feature>
<feature type="binding site" evidence="1">
    <location>
        <position position="315"/>
    </location>
    <ligand>
        <name>NAD(+)</name>
        <dbReference type="ChEBI" id="CHEBI:57540"/>
    </ligand>
</feature>
<feature type="binding site" evidence="1">
    <location>
        <position position="409"/>
    </location>
    <ligand>
        <name>Zn(2+)</name>
        <dbReference type="ChEBI" id="CHEBI:29105"/>
    </ligand>
</feature>
<feature type="binding site" evidence="1">
    <location>
        <position position="412"/>
    </location>
    <ligand>
        <name>Zn(2+)</name>
        <dbReference type="ChEBI" id="CHEBI:29105"/>
    </ligand>
</feature>
<feature type="binding site" evidence="1">
    <location>
        <position position="427"/>
    </location>
    <ligand>
        <name>Zn(2+)</name>
        <dbReference type="ChEBI" id="CHEBI:29105"/>
    </ligand>
</feature>
<feature type="binding site" evidence="1">
    <location>
        <position position="433"/>
    </location>
    <ligand>
        <name>Zn(2+)</name>
        <dbReference type="ChEBI" id="CHEBI:29105"/>
    </ligand>
</feature>
<name>DNLJ_IDILO</name>
<proteinExistence type="inferred from homology"/>
<evidence type="ECO:0000255" key="1">
    <source>
        <dbReference type="HAMAP-Rule" id="MF_01588"/>
    </source>
</evidence>
<gene>
    <name evidence="1" type="primary">ligA</name>
    <name type="ordered locus">IL1700</name>
</gene>
<accession>Q5QUK1</accession>